<organism>
    <name type="scientific">Variovorax paradoxus (strain S110)</name>
    <dbReference type="NCBI Taxonomy" id="543728"/>
    <lineage>
        <taxon>Bacteria</taxon>
        <taxon>Pseudomonadati</taxon>
        <taxon>Pseudomonadota</taxon>
        <taxon>Betaproteobacteria</taxon>
        <taxon>Burkholderiales</taxon>
        <taxon>Comamonadaceae</taxon>
        <taxon>Variovorax</taxon>
    </lineage>
</organism>
<reference key="1">
    <citation type="journal article" date="2011" name="J. Bacteriol.">
        <title>Complete genome sequence of the metabolically versatile plant growth-promoting endophyte, Variovorax paradoxus S110.</title>
        <authorList>
            <person name="Han J.I."/>
            <person name="Choi H.K."/>
            <person name="Lee S.W."/>
            <person name="Orwin P.M."/>
            <person name="Kim J."/>
            <person name="Laroe S.L."/>
            <person name="Kim T.G."/>
            <person name="O'Neil J."/>
            <person name="Leadbetter J.R."/>
            <person name="Lee S.Y."/>
            <person name="Hur C.G."/>
            <person name="Spain J.C."/>
            <person name="Ovchinnikova G."/>
            <person name="Goodwin L."/>
            <person name="Han C."/>
        </authorList>
    </citation>
    <scope>NUCLEOTIDE SEQUENCE [LARGE SCALE GENOMIC DNA]</scope>
    <source>
        <strain>S110</strain>
    </source>
</reference>
<dbReference type="EC" id="6.3.2.1" evidence="1"/>
<dbReference type="EMBL" id="CP001635">
    <property type="protein sequence ID" value="ACS20707.1"/>
    <property type="molecule type" value="Genomic_DNA"/>
</dbReference>
<dbReference type="SMR" id="C5CWV0"/>
<dbReference type="STRING" id="543728.Vapar_4094"/>
<dbReference type="KEGG" id="vap:Vapar_4094"/>
<dbReference type="eggNOG" id="COG0414">
    <property type="taxonomic scope" value="Bacteria"/>
</dbReference>
<dbReference type="HOGENOM" id="CLU_047148_0_0_4"/>
<dbReference type="OrthoDB" id="9773087at2"/>
<dbReference type="UniPathway" id="UPA00028">
    <property type="reaction ID" value="UER00005"/>
</dbReference>
<dbReference type="GO" id="GO:0005829">
    <property type="term" value="C:cytosol"/>
    <property type="evidence" value="ECO:0007669"/>
    <property type="project" value="TreeGrafter"/>
</dbReference>
<dbReference type="GO" id="GO:0005524">
    <property type="term" value="F:ATP binding"/>
    <property type="evidence" value="ECO:0007669"/>
    <property type="project" value="UniProtKB-KW"/>
</dbReference>
<dbReference type="GO" id="GO:0004592">
    <property type="term" value="F:pantoate-beta-alanine ligase activity"/>
    <property type="evidence" value="ECO:0007669"/>
    <property type="project" value="UniProtKB-UniRule"/>
</dbReference>
<dbReference type="GO" id="GO:0015940">
    <property type="term" value="P:pantothenate biosynthetic process"/>
    <property type="evidence" value="ECO:0007669"/>
    <property type="project" value="UniProtKB-UniRule"/>
</dbReference>
<dbReference type="CDD" id="cd00560">
    <property type="entry name" value="PanC"/>
    <property type="match status" value="1"/>
</dbReference>
<dbReference type="Gene3D" id="3.40.50.620">
    <property type="entry name" value="HUPs"/>
    <property type="match status" value="1"/>
</dbReference>
<dbReference type="Gene3D" id="3.30.1300.10">
    <property type="entry name" value="Pantoate-beta-alanine ligase, C-terminal domain"/>
    <property type="match status" value="1"/>
</dbReference>
<dbReference type="HAMAP" id="MF_00158">
    <property type="entry name" value="PanC"/>
    <property type="match status" value="1"/>
</dbReference>
<dbReference type="InterPro" id="IPR003721">
    <property type="entry name" value="Pantoate_ligase"/>
</dbReference>
<dbReference type="InterPro" id="IPR042176">
    <property type="entry name" value="Pantoate_ligase_C"/>
</dbReference>
<dbReference type="InterPro" id="IPR014729">
    <property type="entry name" value="Rossmann-like_a/b/a_fold"/>
</dbReference>
<dbReference type="NCBIfam" id="TIGR00018">
    <property type="entry name" value="panC"/>
    <property type="match status" value="1"/>
</dbReference>
<dbReference type="PANTHER" id="PTHR21299">
    <property type="entry name" value="CYTIDYLATE KINASE/PANTOATE-BETA-ALANINE LIGASE"/>
    <property type="match status" value="1"/>
</dbReference>
<dbReference type="PANTHER" id="PTHR21299:SF1">
    <property type="entry name" value="PANTOATE--BETA-ALANINE LIGASE"/>
    <property type="match status" value="1"/>
</dbReference>
<dbReference type="Pfam" id="PF02569">
    <property type="entry name" value="Pantoate_ligase"/>
    <property type="match status" value="1"/>
</dbReference>
<dbReference type="SUPFAM" id="SSF52374">
    <property type="entry name" value="Nucleotidylyl transferase"/>
    <property type="match status" value="1"/>
</dbReference>
<sequence>MYIAHTIDELRSHLAAFRRPAFVPTMGNLHEGHLALVKQAKPLGDVTVASIFVNRLQFLPHEDFDTYPRTWDSDCEKLRTAGCGVLFAPDEKALYPEPQTCKVHPDPALADILEGHFRPGFFVGVCTVVMKLFQCVQPRVAVFGKKDYQQLMMIRHMVRQFALPIEIVGSETFRADDGLALSSRNGYLSEAERAEAVQLSKALKAMAQAVQAGERDLAAIEARAMQALAQRGWQPDYLVLRRRSDLQAPSSANLAGEPLVALAAARLGGTRLIDNLEIDAMPS</sequence>
<gene>
    <name evidence="1" type="primary">panC</name>
    <name type="ordered locus">Vapar_4094</name>
</gene>
<feature type="chain" id="PRO_1000203498" description="Pantothenate synthetase">
    <location>
        <begin position="1"/>
        <end position="283"/>
    </location>
</feature>
<feature type="active site" description="Proton donor" evidence="1">
    <location>
        <position position="33"/>
    </location>
</feature>
<feature type="binding site" evidence="1">
    <location>
        <begin position="26"/>
        <end position="33"/>
    </location>
    <ligand>
        <name>ATP</name>
        <dbReference type="ChEBI" id="CHEBI:30616"/>
    </ligand>
</feature>
<feature type="binding site" evidence="1">
    <location>
        <position position="57"/>
    </location>
    <ligand>
        <name>(R)-pantoate</name>
        <dbReference type="ChEBI" id="CHEBI:15980"/>
    </ligand>
</feature>
<feature type="binding site" evidence="1">
    <location>
        <position position="57"/>
    </location>
    <ligand>
        <name>beta-alanine</name>
        <dbReference type="ChEBI" id="CHEBI:57966"/>
    </ligand>
</feature>
<feature type="binding site" evidence="1">
    <location>
        <begin position="144"/>
        <end position="147"/>
    </location>
    <ligand>
        <name>ATP</name>
        <dbReference type="ChEBI" id="CHEBI:30616"/>
    </ligand>
</feature>
<feature type="binding site" evidence="1">
    <location>
        <position position="150"/>
    </location>
    <ligand>
        <name>(R)-pantoate</name>
        <dbReference type="ChEBI" id="CHEBI:15980"/>
    </ligand>
</feature>
<feature type="binding site" evidence="1">
    <location>
        <begin position="181"/>
        <end position="184"/>
    </location>
    <ligand>
        <name>ATP</name>
        <dbReference type="ChEBI" id="CHEBI:30616"/>
    </ligand>
</feature>
<evidence type="ECO:0000255" key="1">
    <source>
        <dbReference type="HAMAP-Rule" id="MF_00158"/>
    </source>
</evidence>
<protein>
    <recommendedName>
        <fullName evidence="1">Pantothenate synthetase</fullName>
        <shortName evidence="1">PS</shortName>
        <ecNumber evidence="1">6.3.2.1</ecNumber>
    </recommendedName>
    <alternativeName>
        <fullName evidence="1">Pantoate--beta-alanine ligase</fullName>
    </alternativeName>
    <alternativeName>
        <fullName evidence="1">Pantoate-activating enzyme</fullName>
    </alternativeName>
</protein>
<accession>C5CWV0</accession>
<proteinExistence type="inferred from homology"/>
<keyword id="KW-0067">ATP-binding</keyword>
<keyword id="KW-0963">Cytoplasm</keyword>
<keyword id="KW-0436">Ligase</keyword>
<keyword id="KW-0547">Nucleotide-binding</keyword>
<keyword id="KW-0566">Pantothenate biosynthesis</keyword>
<comment type="function">
    <text evidence="1">Catalyzes the condensation of pantoate with beta-alanine in an ATP-dependent reaction via a pantoyl-adenylate intermediate.</text>
</comment>
<comment type="catalytic activity">
    <reaction evidence="1">
        <text>(R)-pantoate + beta-alanine + ATP = (R)-pantothenate + AMP + diphosphate + H(+)</text>
        <dbReference type="Rhea" id="RHEA:10912"/>
        <dbReference type="ChEBI" id="CHEBI:15378"/>
        <dbReference type="ChEBI" id="CHEBI:15980"/>
        <dbReference type="ChEBI" id="CHEBI:29032"/>
        <dbReference type="ChEBI" id="CHEBI:30616"/>
        <dbReference type="ChEBI" id="CHEBI:33019"/>
        <dbReference type="ChEBI" id="CHEBI:57966"/>
        <dbReference type="ChEBI" id="CHEBI:456215"/>
        <dbReference type="EC" id="6.3.2.1"/>
    </reaction>
</comment>
<comment type="pathway">
    <text evidence="1">Cofactor biosynthesis; (R)-pantothenate biosynthesis; (R)-pantothenate from (R)-pantoate and beta-alanine: step 1/1.</text>
</comment>
<comment type="subunit">
    <text evidence="1">Homodimer.</text>
</comment>
<comment type="subcellular location">
    <subcellularLocation>
        <location evidence="1">Cytoplasm</location>
    </subcellularLocation>
</comment>
<comment type="miscellaneous">
    <text evidence="1">The reaction proceeds by a bi uni uni bi ping pong mechanism.</text>
</comment>
<comment type="similarity">
    <text evidence="1">Belongs to the pantothenate synthetase family.</text>
</comment>
<name>PANC_VARPS</name>